<feature type="chain" id="PRO_0000349487" description="Actin cytoskeleton-regulatory complex protein PAN1">
    <location>
        <begin position="1"/>
        <end position="1634"/>
    </location>
</feature>
<feature type="domain" description="EH 1" evidence="3">
    <location>
        <begin position="233"/>
        <end position="322"/>
    </location>
</feature>
<feature type="domain" description="EF-hand 1" evidence="4">
    <location>
        <begin position="266"/>
        <end position="301"/>
    </location>
</feature>
<feature type="domain" description="EH 2" evidence="3">
    <location>
        <begin position="576"/>
        <end position="665"/>
    </location>
</feature>
<feature type="domain" description="EF-hand 2" evidence="4">
    <location>
        <begin position="609"/>
        <end position="644"/>
    </location>
</feature>
<feature type="domain" description="WH2">
    <location>
        <begin position="1599"/>
        <end position="1616"/>
    </location>
</feature>
<feature type="region of interest" description="Disordered" evidence="5">
    <location>
        <begin position="1"/>
        <end position="215"/>
    </location>
</feature>
<feature type="region of interest" description="Disordered" evidence="5">
    <location>
        <begin position="330"/>
        <end position="471"/>
    </location>
</feature>
<feature type="region of interest" description="Disordered" evidence="5">
    <location>
        <begin position="492"/>
        <end position="522"/>
    </location>
</feature>
<feature type="region of interest" description="Disordered" evidence="5">
    <location>
        <begin position="711"/>
        <end position="744"/>
    </location>
</feature>
<feature type="region of interest" description="Disordered" evidence="5">
    <location>
        <begin position="946"/>
        <end position="965"/>
    </location>
</feature>
<feature type="region of interest" description="Disordered" evidence="5">
    <location>
        <begin position="985"/>
        <end position="1634"/>
    </location>
</feature>
<feature type="coiled-coil region" evidence="2">
    <location>
        <begin position="748"/>
        <end position="803"/>
    </location>
</feature>
<feature type="coiled-coil region" evidence="2">
    <location>
        <begin position="831"/>
        <end position="859"/>
    </location>
</feature>
<feature type="coiled-coil region" evidence="2">
    <location>
        <begin position="1131"/>
        <end position="1198"/>
    </location>
</feature>
<feature type="compositionally biased region" description="Gly residues" evidence="5">
    <location>
        <begin position="1"/>
        <end position="11"/>
    </location>
</feature>
<feature type="compositionally biased region" description="Low complexity" evidence="5">
    <location>
        <begin position="28"/>
        <end position="42"/>
    </location>
</feature>
<feature type="compositionally biased region" description="Low complexity" evidence="5">
    <location>
        <begin position="55"/>
        <end position="74"/>
    </location>
</feature>
<feature type="compositionally biased region" description="Polar residues" evidence="5">
    <location>
        <begin position="75"/>
        <end position="93"/>
    </location>
</feature>
<feature type="compositionally biased region" description="Low complexity" evidence="5">
    <location>
        <begin position="110"/>
        <end position="180"/>
    </location>
</feature>
<feature type="compositionally biased region" description="Low complexity" evidence="5">
    <location>
        <begin position="335"/>
        <end position="359"/>
    </location>
</feature>
<feature type="compositionally biased region" description="Low complexity" evidence="5">
    <location>
        <begin position="368"/>
        <end position="386"/>
    </location>
</feature>
<feature type="compositionally biased region" description="Polar residues" evidence="5">
    <location>
        <begin position="387"/>
        <end position="471"/>
    </location>
</feature>
<feature type="compositionally biased region" description="Polar residues" evidence="5">
    <location>
        <begin position="492"/>
        <end position="513"/>
    </location>
</feature>
<feature type="compositionally biased region" description="Low complexity" evidence="5">
    <location>
        <begin position="723"/>
        <end position="737"/>
    </location>
</feature>
<feature type="compositionally biased region" description="Low complexity" evidence="5">
    <location>
        <begin position="985"/>
        <end position="1028"/>
    </location>
</feature>
<feature type="compositionally biased region" description="Basic and acidic residues" evidence="5">
    <location>
        <begin position="1029"/>
        <end position="1045"/>
    </location>
</feature>
<feature type="compositionally biased region" description="Low complexity" evidence="5">
    <location>
        <begin position="1071"/>
        <end position="1129"/>
    </location>
</feature>
<feature type="compositionally biased region" description="Acidic residues" evidence="5">
    <location>
        <begin position="1130"/>
        <end position="1139"/>
    </location>
</feature>
<feature type="compositionally biased region" description="Basic and acidic residues" evidence="5">
    <location>
        <begin position="1140"/>
        <end position="1203"/>
    </location>
</feature>
<feature type="compositionally biased region" description="Low complexity" evidence="5">
    <location>
        <begin position="1211"/>
        <end position="1255"/>
    </location>
</feature>
<feature type="compositionally biased region" description="Low complexity" evidence="5">
    <location>
        <begin position="1265"/>
        <end position="1284"/>
    </location>
</feature>
<feature type="compositionally biased region" description="Low complexity" evidence="5">
    <location>
        <begin position="1293"/>
        <end position="1304"/>
    </location>
</feature>
<feature type="compositionally biased region" description="Acidic residues" evidence="5">
    <location>
        <begin position="1331"/>
        <end position="1345"/>
    </location>
</feature>
<feature type="compositionally biased region" description="Low complexity" evidence="5">
    <location>
        <begin position="1371"/>
        <end position="1386"/>
    </location>
</feature>
<feature type="compositionally biased region" description="Pro residues" evidence="5">
    <location>
        <begin position="1387"/>
        <end position="1396"/>
    </location>
</feature>
<feature type="compositionally biased region" description="Low complexity" evidence="5">
    <location>
        <begin position="1397"/>
        <end position="1413"/>
    </location>
</feature>
<feature type="compositionally biased region" description="Pro residues" evidence="5">
    <location>
        <begin position="1414"/>
        <end position="1423"/>
    </location>
</feature>
<feature type="compositionally biased region" description="Low complexity" evidence="5">
    <location>
        <begin position="1424"/>
        <end position="1442"/>
    </location>
</feature>
<feature type="compositionally biased region" description="Pro residues" evidence="5">
    <location>
        <begin position="1494"/>
        <end position="1503"/>
    </location>
</feature>
<feature type="compositionally biased region" description="Low complexity" evidence="5">
    <location>
        <begin position="1520"/>
        <end position="1529"/>
    </location>
</feature>
<feature type="compositionally biased region" description="Pro residues" evidence="5">
    <location>
        <begin position="1530"/>
        <end position="1551"/>
    </location>
</feature>
<feature type="compositionally biased region" description="Pro residues" evidence="5">
    <location>
        <begin position="1559"/>
        <end position="1581"/>
    </location>
</feature>
<feature type="compositionally biased region" description="Basic and acidic residues" evidence="5">
    <location>
        <begin position="1614"/>
        <end position="1623"/>
    </location>
</feature>
<sequence length="1634" mass="171976">MYGYQGTGGQQPLGAQPTGFGFGNTPVQQQQQPMQPMQQSQPTGYQAPGGFQNYQPTGFAQQQQQQQPQQTGFQSMQPPMQQTGFQSQPNVSMYQGGGGQGYQSAPMLHQQTMQTGYQPQQQQPGFTGFQPQQQQQQQQTGFTGFQQQPQQQQPGFTGFQSQPTGYNANASAPAATPAAPLQQQKTGNARDPFAPTLPARPPLTSQPTGGGNKSVVDGVYIPNVRLSFLTADDQRNFENLFRQALPKGEQALSGDKARDILFRSGLPPITLSAIWNLADTTRSGALLFPEFAVAMYLCGQAVKGQTVPNNLSENIKNEVSSMVDIISFNIPDAGSRPSSSGQSVPQSQPQQQQQQSSASMLAGLNLGQPTGYQQQQATGYQPMQQQSTGYPMQAMQPQITGGMPLQQQRTGPMQPLQQQSTGYAPLQSQLTGGAPLQSQLTGGAPLQSQLTGGAPLQSQLTGGAPLQQQSTGYAPLQQQSTGYAPLQQQSTGYMPQQQTGMQPQSTGYGSMQPLTAMPTGKPGQWGFINTPSQGLPGIETMQQRLMPQATGAPVQQLPPMQLQQSATVNWAIAKEEKQIYDGIFMAWDKKRAGAIDGDTAIKIFTQSGLNRADLEAIWTLSDPSNKGRLDRDEFAVAMHLIYRHLNGYPIPSRLPPELVPPSSKNFSDSVNQVKSYLKAGGGRTGGSKLKSRSFTGDSTIKKDATVFKNDDSDFGYTSRNRRGGSSSTASSNGSSGNDISLSGKGSSISELKKLIREKQILLDAIDAEDSDMSRDSNLERRDQEAVADLKRRIQNVQRDIDVAPHSAISTDVGASADAKRNLMRKLDHLGDRLPQLASNVRRIEDKIANAKMELFRLKNPTSLVGTGPGGAITEADRIKARSKAKLQARMAALTGKGTTTGADASEEEDYEHRLLTHTSEVERSKAQNYEMIHDIEDSVKSLQRDLSSKLRETQEEVSEDRQRRRWEEAVGVEDDVRQFIYSLRSTRSSRPAPATASSSAPATGSPATAAPISATSTGASTPSAPAAGVDRKAQLKAEAERKMNERLAALGIKRKEKAQAHGFAPPDAKPAEASPAASPAVASPAVASPAATPAVSSPAPVSRGVPAPAAATPATDPATTPAVPVSAPADDSDSDDEEYEKLMAQKREQEERFKKQQEADKKKEEEKKQKKAAKEERMRKLREEMEANEAREKAWKESQSKEAEADEAEGDVGAAALAAFSNKATAPSTTPTAVAATPPVATSTPSPAAPTVPAADDNNPFHRLNNGGDAAAAAPAAGGEDNNPFLRPGTNQPIAAPSPASFSEAPKEAPKPVDPVKISNQRANQRAAKNDDDDWGMSSDEDDDQDYHRGNAAELASQLFRTMAPPIQRQPTGGAPITATPTGSAPAAPPAAPPVAPAAVEVAVAASEATPGPESAPPAPPMPEINIPPATEAPSAPAATEAPPAPPSAPTTIETTHLPPPVDTHNDMSSSEFDFETPEGSPTQQTFAEAAPPVAAPPPPPPTAAAAAPTGIPPPPPSAPGFGAPEAPSGIPPPPPPAPGFGAPPPPPGPAPSFDAPGGAPPPPPPGPPPPMFGAPAPPSMTGPSAGDLPERPPAATGGITALLGEITGGKTLRRVDDKDKKISSNPSAGAVLN</sequence>
<dbReference type="EMBL" id="CR382130">
    <property type="protein sequence ID" value="CAG81042.1"/>
    <property type="molecule type" value="Genomic_DNA"/>
</dbReference>
<dbReference type="RefSeq" id="XP_502854.1">
    <property type="nucleotide sequence ID" value="XM_502854.1"/>
</dbReference>
<dbReference type="SMR" id="Q6C908"/>
<dbReference type="FunCoup" id="Q6C908">
    <property type="interactions" value="63"/>
</dbReference>
<dbReference type="STRING" id="284591.Q6C908"/>
<dbReference type="EnsemblFungi" id="CAG81042">
    <property type="protein sequence ID" value="CAG81042"/>
    <property type="gene ID" value="YALI0_D15304g"/>
</dbReference>
<dbReference type="KEGG" id="yli:2910754"/>
<dbReference type="VEuPathDB" id="FungiDB:YALI0_D15304g"/>
<dbReference type="HOGENOM" id="CLU_001963_1_0_1"/>
<dbReference type="InParanoid" id="Q6C908"/>
<dbReference type="OMA" id="GMPGQWG"/>
<dbReference type="OrthoDB" id="3068at4891"/>
<dbReference type="Proteomes" id="UP000001300">
    <property type="component" value="Chromosome D"/>
</dbReference>
<dbReference type="GO" id="GO:0030479">
    <property type="term" value="C:actin cortical patch"/>
    <property type="evidence" value="ECO:0007669"/>
    <property type="project" value="UniProtKB-SubCell"/>
</dbReference>
<dbReference type="GO" id="GO:0005737">
    <property type="term" value="C:cytoplasm"/>
    <property type="evidence" value="ECO:0000318"/>
    <property type="project" value="GO_Central"/>
</dbReference>
<dbReference type="GO" id="GO:0010008">
    <property type="term" value="C:endosome membrane"/>
    <property type="evidence" value="ECO:0007669"/>
    <property type="project" value="UniProtKB-SubCell"/>
</dbReference>
<dbReference type="GO" id="GO:0005886">
    <property type="term" value="C:plasma membrane"/>
    <property type="evidence" value="ECO:0000318"/>
    <property type="project" value="GO_Central"/>
</dbReference>
<dbReference type="GO" id="GO:0003779">
    <property type="term" value="F:actin binding"/>
    <property type="evidence" value="ECO:0007669"/>
    <property type="project" value="UniProtKB-KW"/>
</dbReference>
<dbReference type="GO" id="GO:0005509">
    <property type="term" value="F:calcium ion binding"/>
    <property type="evidence" value="ECO:0007669"/>
    <property type="project" value="InterPro"/>
</dbReference>
<dbReference type="GO" id="GO:0006897">
    <property type="term" value="P:endocytosis"/>
    <property type="evidence" value="ECO:0000318"/>
    <property type="project" value="GO_Central"/>
</dbReference>
<dbReference type="GO" id="GO:0016197">
    <property type="term" value="P:endosomal transport"/>
    <property type="evidence" value="ECO:0000318"/>
    <property type="project" value="GO_Central"/>
</dbReference>
<dbReference type="CDD" id="cd00052">
    <property type="entry name" value="EH"/>
    <property type="match status" value="2"/>
</dbReference>
<dbReference type="FunFam" id="1.10.238.10:FF:000349">
    <property type="entry name" value="Actin cytoskeleton-regulatory complex protein PAN1"/>
    <property type="match status" value="1"/>
</dbReference>
<dbReference type="Gene3D" id="1.10.238.10">
    <property type="entry name" value="EF-hand"/>
    <property type="match status" value="2"/>
</dbReference>
<dbReference type="InterPro" id="IPR013182">
    <property type="entry name" value="DUF1720"/>
</dbReference>
<dbReference type="InterPro" id="IPR011992">
    <property type="entry name" value="EF-hand-dom_pair"/>
</dbReference>
<dbReference type="InterPro" id="IPR002048">
    <property type="entry name" value="EF_hand_dom"/>
</dbReference>
<dbReference type="InterPro" id="IPR000261">
    <property type="entry name" value="EH_dom"/>
</dbReference>
<dbReference type="PANTHER" id="PTHR11216:SF173">
    <property type="entry name" value="ACTIN CYTOSKELETON-REGULATORY COMPLEX PROTEIN PAN1"/>
    <property type="match status" value="1"/>
</dbReference>
<dbReference type="PANTHER" id="PTHR11216">
    <property type="entry name" value="EH DOMAIN"/>
    <property type="match status" value="1"/>
</dbReference>
<dbReference type="Pfam" id="PF08226">
    <property type="entry name" value="DUF1720"/>
    <property type="match status" value="2"/>
</dbReference>
<dbReference type="Pfam" id="PF12763">
    <property type="entry name" value="EH"/>
    <property type="match status" value="2"/>
</dbReference>
<dbReference type="SMART" id="SM00054">
    <property type="entry name" value="EFh"/>
    <property type="match status" value="2"/>
</dbReference>
<dbReference type="SMART" id="SM00027">
    <property type="entry name" value="EH"/>
    <property type="match status" value="2"/>
</dbReference>
<dbReference type="SUPFAM" id="SSF47473">
    <property type="entry name" value="EF-hand"/>
    <property type="match status" value="2"/>
</dbReference>
<dbReference type="PROSITE" id="PS50222">
    <property type="entry name" value="EF_HAND_2"/>
    <property type="match status" value="2"/>
</dbReference>
<dbReference type="PROSITE" id="PS50031">
    <property type="entry name" value="EH"/>
    <property type="match status" value="2"/>
</dbReference>
<comment type="function">
    <text evidence="1">Component of the PAN1 actin cytoskeleton-regulatory complex required for the internalization of endosomes during actin-coupled endocytosis. The complex links the site of endocytosis to the cell membrane-associated actin cytoskeleton. Mediates uptake of external molecules and vacuolar degradation of plasma membrane proteins. Plays a role in the proper organization of the cell membrane-associated actin cytoskeleton and promotes its destabilization (By similarity).</text>
</comment>
<comment type="subunit">
    <text evidence="1">Component of the PAN1 actin cytoskeleton-regulatory complex.</text>
</comment>
<comment type="subcellular location">
    <subcellularLocation>
        <location evidence="1">Cell membrane</location>
        <topology evidence="1">Peripheral membrane protein</topology>
        <orientation evidence="1">Cytoplasmic side</orientation>
    </subcellularLocation>
    <subcellularLocation>
        <location evidence="1">Endosome membrane</location>
        <topology evidence="1">Peripheral membrane protein</topology>
        <orientation evidence="1">Cytoplasmic side</orientation>
    </subcellularLocation>
    <subcellularLocation>
        <location evidence="1">Cytoplasm</location>
        <location evidence="1">Cytoskeleton</location>
        <location evidence="1">Actin patch</location>
    </subcellularLocation>
    <text evidence="1">Cytoplasmic and cortical actin patches.</text>
</comment>
<comment type="similarity">
    <text evidence="6">Belongs to the PAN1 family.</text>
</comment>
<reference key="1">
    <citation type="journal article" date="2004" name="Nature">
        <title>Genome evolution in yeasts.</title>
        <authorList>
            <person name="Dujon B."/>
            <person name="Sherman D."/>
            <person name="Fischer G."/>
            <person name="Durrens P."/>
            <person name="Casaregola S."/>
            <person name="Lafontaine I."/>
            <person name="de Montigny J."/>
            <person name="Marck C."/>
            <person name="Neuveglise C."/>
            <person name="Talla E."/>
            <person name="Goffard N."/>
            <person name="Frangeul L."/>
            <person name="Aigle M."/>
            <person name="Anthouard V."/>
            <person name="Babour A."/>
            <person name="Barbe V."/>
            <person name="Barnay S."/>
            <person name="Blanchin S."/>
            <person name="Beckerich J.-M."/>
            <person name="Beyne E."/>
            <person name="Bleykasten C."/>
            <person name="Boisrame A."/>
            <person name="Boyer J."/>
            <person name="Cattolico L."/>
            <person name="Confanioleri F."/>
            <person name="de Daruvar A."/>
            <person name="Despons L."/>
            <person name="Fabre E."/>
            <person name="Fairhead C."/>
            <person name="Ferry-Dumazet H."/>
            <person name="Groppi A."/>
            <person name="Hantraye F."/>
            <person name="Hennequin C."/>
            <person name="Jauniaux N."/>
            <person name="Joyet P."/>
            <person name="Kachouri R."/>
            <person name="Kerrest A."/>
            <person name="Koszul R."/>
            <person name="Lemaire M."/>
            <person name="Lesur I."/>
            <person name="Ma L."/>
            <person name="Muller H."/>
            <person name="Nicaud J.-M."/>
            <person name="Nikolski M."/>
            <person name="Oztas S."/>
            <person name="Ozier-Kalogeropoulos O."/>
            <person name="Pellenz S."/>
            <person name="Potier S."/>
            <person name="Richard G.-F."/>
            <person name="Straub M.-L."/>
            <person name="Suleau A."/>
            <person name="Swennen D."/>
            <person name="Tekaia F."/>
            <person name="Wesolowski-Louvel M."/>
            <person name="Westhof E."/>
            <person name="Wirth B."/>
            <person name="Zeniou-Meyer M."/>
            <person name="Zivanovic Y."/>
            <person name="Bolotin-Fukuhara M."/>
            <person name="Thierry A."/>
            <person name="Bouchier C."/>
            <person name="Caudron B."/>
            <person name="Scarpelli C."/>
            <person name="Gaillardin C."/>
            <person name="Weissenbach J."/>
            <person name="Wincker P."/>
            <person name="Souciet J.-L."/>
        </authorList>
    </citation>
    <scope>NUCLEOTIDE SEQUENCE [LARGE SCALE GENOMIC DNA]</scope>
    <source>
        <strain>CLIB 122 / E 150</strain>
    </source>
</reference>
<name>PAN1_YARLI</name>
<protein>
    <recommendedName>
        <fullName>Actin cytoskeleton-regulatory complex protein PAN1</fullName>
    </recommendedName>
</protein>
<proteinExistence type="inferred from homology"/>
<organism>
    <name type="scientific">Yarrowia lipolytica (strain CLIB 122 / E 150)</name>
    <name type="common">Yeast</name>
    <name type="synonym">Candida lipolytica</name>
    <dbReference type="NCBI Taxonomy" id="284591"/>
    <lineage>
        <taxon>Eukaryota</taxon>
        <taxon>Fungi</taxon>
        <taxon>Dikarya</taxon>
        <taxon>Ascomycota</taxon>
        <taxon>Saccharomycotina</taxon>
        <taxon>Dipodascomycetes</taxon>
        <taxon>Dipodascales</taxon>
        <taxon>Dipodascales incertae sedis</taxon>
        <taxon>Yarrowia</taxon>
    </lineage>
</organism>
<accession>Q6C908</accession>
<evidence type="ECO:0000250" key="1"/>
<evidence type="ECO:0000255" key="2"/>
<evidence type="ECO:0000255" key="3">
    <source>
        <dbReference type="PROSITE-ProRule" id="PRU00077"/>
    </source>
</evidence>
<evidence type="ECO:0000255" key="4">
    <source>
        <dbReference type="PROSITE-ProRule" id="PRU00448"/>
    </source>
</evidence>
<evidence type="ECO:0000256" key="5">
    <source>
        <dbReference type="SAM" id="MobiDB-lite"/>
    </source>
</evidence>
<evidence type="ECO:0000305" key="6"/>
<gene>
    <name type="primary">PAN1</name>
    <name type="ordered locus">YALI0D15304g</name>
</gene>
<keyword id="KW-0009">Actin-binding</keyword>
<keyword id="KW-1003">Cell membrane</keyword>
<keyword id="KW-0175">Coiled coil</keyword>
<keyword id="KW-0963">Cytoplasm</keyword>
<keyword id="KW-0206">Cytoskeleton</keyword>
<keyword id="KW-0254">Endocytosis</keyword>
<keyword id="KW-0967">Endosome</keyword>
<keyword id="KW-0472">Membrane</keyword>
<keyword id="KW-1185">Reference proteome</keyword>
<keyword id="KW-0677">Repeat</keyword>